<reference key="1">
    <citation type="journal article" date="2008" name="DNA Res.">
        <title>Complete genome sequence and comparative analysis of the wild-type commensal Escherichia coli strain SE11 isolated from a healthy adult.</title>
        <authorList>
            <person name="Oshima K."/>
            <person name="Toh H."/>
            <person name="Ogura Y."/>
            <person name="Sasamoto H."/>
            <person name="Morita H."/>
            <person name="Park S.-H."/>
            <person name="Ooka T."/>
            <person name="Iyoda S."/>
            <person name="Taylor T.D."/>
            <person name="Hayashi T."/>
            <person name="Itoh K."/>
            <person name="Hattori M."/>
        </authorList>
    </citation>
    <scope>NUCLEOTIDE SEQUENCE [LARGE SCALE GENOMIC DNA]</scope>
    <source>
        <strain>SE11</strain>
    </source>
</reference>
<proteinExistence type="inferred from homology"/>
<dbReference type="EC" id="2.3.1.40" evidence="1"/>
<dbReference type="EC" id="6.2.1.20" evidence="1"/>
<dbReference type="EMBL" id="AP009240">
    <property type="protein sequence ID" value="BAG78617.1"/>
    <property type="molecule type" value="Genomic_DNA"/>
</dbReference>
<dbReference type="RefSeq" id="WP_000899069.1">
    <property type="nucleotide sequence ID" value="NC_011415.1"/>
</dbReference>
<dbReference type="SMR" id="B6I6W1"/>
<dbReference type="GeneID" id="93779160"/>
<dbReference type="KEGG" id="ecy:ECSE_3093"/>
<dbReference type="HOGENOM" id="CLU_000022_59_8_6"/>
<dbReference type="Proteomes" id="UP000008199">
    <property type="component" value="Chromosome"/>
</dbReference>
<dbReference type="GO" id="GO:0005886">
    <property type="term" value="C:plasma membrane"/>
    <property type="evidence" value="ECO:0007669"/>
    <property type="project" value="UniProtKB-SubCell"/>
</dbReference>
<dbReference type="GO" id="GO:0008779">
    <property type="term" value="F:acyl-[acyl-carrier-protein]-phospholipid O-acyltransferase activity"/>
    <property type="evidence" value="ECO:0007669"/>
    <property type="project" value="UniProtKB-UniRule"/>
</dbReference>
<dbReference type="GO" id="GO:0005524">
    <property type="term" value="F:ATP binding"/>
    <property type="evidence" value="ECO:0007669"/>
    <property type="project" value="UniProtKB-KW"/>
</dbReference>
<dbReference type="GO" id="GO:0008922">
    <property type="term" value="F:long-chain fatty acid [acyl-carrier-protein] ligase activity"/>
    <property type="evidence" value="ECO:0007669"/>
    <property type="project" value="UniProtKB-UniRule"/>
</dbReference>
<dbReference type="GO" id="GO:0031956">
    <property type="term" value="F:medium-chain fatty acid-CoA ligase activity"/>
    <property type="evidence" value="ECO:0007669"/>
    <property type="project" value="TreeGrafter"/>
</dbReference>
<dbReference type="GO" id="GO:0006631">
    <property type="term" value="P:fatty acid metabolic process"/>
    <property type="evidence" value="ECO:0007669"/>
    <property type="project" value="InterPro"/>
</dbReference>
<dbReference type="GO" id="GO:0008654">
    <property type="term" value="P:phospholipid biosynthetic process"/>
    <property type="evidence" value="ECO:0007669"/>
    <property type="project" value="InterPro"/>
</dbReference>
<dbReference type="CDD" id="cd05909">
    <property type="entry name" value="AAS_C"/>
    <property type="match status" value="1"/>
</dbReference>
<dbReference type="CDD" id="cd07989">
    <property type="entry name" value="LPLAT_AGPAT-like"/>
    <property type="match status" value="1"/>
</dbReference>
<dbReference type="FunFam" id="3.30.300.30:FF:000009">
    <property type="entry name" value="Bifunctional protein Aas"/>
    <property type="match status" value="1"/>
</dbReference>
<dbReference type="FunFam" id="3.40.50.12780:FF:000009">
    <property type="entry name" value="Bifunctional protein Aas"/>
    <property type="match status" value="1"/>
</dbReference>
<dbReference type="Gene3D" id="3.30.300.30">
    <property type="match status" value="1"/>
</dbReference>
<dbReference type="Gene3D" id="3.40.50.12780">
    <property type="entry name" value="N-terminal domain of ligase-like"/>
    <property type="match status" value="1"/>
</dbReference>
<dbReference type="HAMAP" id="MF_01162">
    <property type="entry name" value="Aas"/>
    <property type="match status" value="1"/>
</dbReference>
<dbReference type="InterPro" id="IPR023775">
    <property type="entry name" value="Aas"/>
</dbReference>
<dbReference type="InterPro" id="IPR045851">
    <property type="entry name" value="AMP-bd_C_sf"/>
</dbReference>
<dbReference type="InterPro" id="IPR020845">
    <property type="entry name" value="AMP-binding_CS"/>
</dbReference>
<dbReference type="InterPro" id="IPR000873">
    <property type="entry name" value="AMP-dep_synth/lig_dom"/>
</dbReference>
<dbReference type="InterPro" id="IPR042099">
    <property type="entry name" value="ANL_N_sf"/>
</dbReference>
<dbReference type="InterPro" id="IPR002123">
    <property type="entry name" value="Plipid/glycerol_acylTrfase"/>
</dbReference>
<dbReference type="NCBIfam" id="NF005959">
    <property type="entry name" value="PRK08043.1"/>
    <property type="match status" value="1"/>
</dbReference>
<dbReference type="PANTHER" id="PTHR43201">
    <property type="entry name" value="ACYL-COA SYNTHETASE"/>
    <property type="match status" value="1"/>
</dbReference>
<dbReference type="PANTHER" id="PTHR43201:SF8">
    <property type="entry name" value="ACYL-COA SYNTHETASE FAMILY MEMBER 3"/>
    <property type="match status" value="1"/>
</dbReference>
<dbReference type="Pfam" id="PF01553">
    <property type="entry name" value="Acyltransferase"/>
    <property type="match status" value="1"/>
</dbReference>
<dbReference type="Pfam" id="PF00501">
    <property type="entry name" value="AMP-binding"/>
    <property type="match status" value="1"/>
</dbReference>
<dbReference type="SMART" id="SM00563">
    <property type="entry name" value="PlsC"/>
    <property type="match status" value="1"/>
</dbReference>
<dbReference type="SUPFAM" id="SSF56801">
    <property type="entry name" value="Acetyl-CoA synthetase-like"/>
    <property type="match status" value="1"/>
</dbReference>
<dbReference type="SUPFAM" id="SSF69593">
    <property type="entry name" value="Glycerol-3-phosphate (1)-acyltransferase"/>
    <property type="match status" value="1"/>
</dbReference>
<dbReference type="PROSITE" id="PS00455">
    <property type="entry name" value="AMP_BINDING"/>
    <property type="match status" value="1"/>
</dbReference>
<accession>B6I6W1</accession>
<keyword id="KW-0012">Acyltransferase</keyword>
<keyword id="KW-0067">ATP-binding</keyword>
<keyword id="KW-0997">Cell inner membrane</keyword>
<keyword id="KW-1003">Cell membrane</keyword>
<keyword id="KW-0436">Ligase</keyword>
<keyword id="KW-0472">Membrane</keyword>
<keyword id="KW-0511">Multifunctional enzyme</keyword>
<keyword id="KW-0547">Nucleotide-binding</keyword>
<keyword id="KW-0808">Transferase</keyword>
<keyword id="KW-0812">Transmembrane</keyword>
<keyword id="KW-1133">Transmembrane helix</keyword>
<comment type="function">
    <text evidence="1">Plays a role in lysophospholipid acylation. Transfers fatty acids to the 1-position via an enzyme-bound acyl-ACP intermediate in the presence of ATP and magnesium. Its physiological function is to regenerate phosphatidylethanolamine from 2-acyl-glycero-3-phosphoethanolamine (2-acyl-GPE) formed by transacylation reactions or degradation by phospholipase A1.</text>
</comment>
<comment type="catalytic activity">
    <reaction evidence="1">
        <text>a 2-acyl-sn-glycero-3-phosphoethanolamine + a fatty acyl-[ACP] = a 1,2-diacyl-sn-glycero-3-phosphoethanolamine + holo-[ACP]</text>
        <dbReference type="Rhea" id="RHEA:10304"/>
        <dbReference type="Rhea" id="RHEA-COMP:9685"/>
        <dbReference type="Rhea" id="RHEA-COMP:14125"/>
        <dbReference type="ChEBI" id="CHEBI:64479"/>
        <dbReference type="ChEBI" id="CHEBI:64612"/>
        <dbReference type="ChEBI" id="CHEBI:65213"/>
        <dbReference type="ChEBI" id="CHEBI:138651"/>
        <dbReference type="EC" id="2.3.1.40"/>
    </reaction>
</comment>
<comment type="catalytic activity">
    <reaction evidence="1">
        <text>a long-chain fatty acid + holo-[ACP] + ATP = a long-chain fatty acyl-[ACP] + AMP + diphosphate</text>
        <dbReference type="Rhea" id="RHEA:45588"/>
        <dbReference type="Rhea" id="RHEA-COMP:9685"/>
        <dbReference type="Rhea" id="RHEA-COMP:12682"/>
        <dbReference type="ChEBI" id="CHEBI:30616"/>
        <dbReference type="ChEBI" id="CHEBI:33019"/>
        <dbReference type="ChEBI" id="CHEBI:57560"/>
        <dbReference type="ChEBI" id="CHEBI:64479"/>
        <dbReference type="ChEBI" id="CHEBI:133243"/>
        <dbReference type="ChEBI" id="CHEBI:456215"/>
        <dbReference type="EC" id="6.2.1.20"/>
    </reaction>
</comment>
<comment type="subcellular location">
    <subcellularLocation>
        <location evidence="1">Cell inner membrane</location>
        <topology evidence="1">Multi-pass membrane protein</topology>
    </subcellularLocation>
</comment>
<comment type="similarity">
    <text evidence="1">In the N-terminal section; belongs to the 2-acyl-GPE acetyltransferase family.</text>
</comment>
<comment type="similarity">
    <text evidence="1">In the C-terminal section; belongs to the ATP-dependent AMP-binding enzyme family.</text>
</comment>
<sequence>MLFSFFRNLCRVLYRVRVTGDTQALKGERVLITPNHVSFIDGILLGLFLPVRPVFAVYTSISQQWYMRWLKSFIDFVPLDPTQPMAIKHLVRLVEQGRPVVIFPEGRITTTGSLMKIYDGAGFVAAKSGATVIPVRIEGAELTHFSRLKGLVKRRLFPQITLHILPPTQVEMPDAPRARDRRKIAGEMLHQIMMEARMAVRPRETLYESLLSAMYRFGAGKKCVEDVNFTPDSYRKLLTKTLFVGRILEKYSVEGERIGLMLPNAGISAAVIFGAIARRRIPAMMNYTAGVKGLTSAITAAEIKTIFTSRQFLDKGKLWHLPEQLTQVRWVYLEDLKADVTTADKVWIFAHLLMPRLAQVKQQPEEEALILFTSGSEGHPKGVVHSHKSILANVEQIKTIADFTTNDRFMSALPLFHSFGLTVGLFTPLLTGAEVFLYPSPLHYRIVPELVYDRSCTVLFGTSTFLGHYARFANPYDFYRLRYVVAGAEKLQESTKQLWQDKFGLRILEGYGVTECAPVVSINVPMAAKPGTVGRILPGMDARLLSVPGIEEGGRLQLKGPNIMNGYLRVEKPGVLEVPTAENVRGEMERGWYDTGDIVRFDEQGFVQIQGRAKRFAKIAGEMVSLEMVEQLALGVSPDKVHATAIKSDASKGEALVLFTTDNELTRDKLQQYAREHGVPELAVPRDIRYLKQMPLLGSGKPDFVTLKSWVDEAEQHDE</sequence>
<organism>
    <name type="scientific">Escherichia coli (strain SE11)</name>
    <dbReference type="NCBI Taxonomy" id="409438"/>
    <lineage>
        <taxon>Bacteria</taxon>
        <taxon>Pseudomonadati</taxon>
        <taxon>Pseudomonadota</taxon>
        <taxon>Gammaproteobacteria</taxon>
        <taxon>Enterobacterales</taxon>
        <taxon>Enterobacteriaceae</taxon>
        <taxon>Escherichia</taxon>
    </lineage>
</organism>
<name>AAS_ECOSE</name>
<evidence type="ECO:0000255" key="1">
    <source>
        <dbReference type="HAMAP-Rule" id="MF_01162"/>
    </source>
</evidence>
<gene>
    <name evidence="1" type="primary">aas</name>
    <name type="ordered locus">ECSE_3093</name>
</gene>
<feature type="chain" id="PRO_1000137890" description="Bifunctional protein Aas">
    <location>
        <begin position="1"/>
        <end position="719"/>
    </location>
</feature>
<feature type="transmembrane region" description="Helical" evidence="1">
    <location>
        <begin position="258"/>
        <end position="277"/>
    </location>
</feature>
<feature type="transmembrane region" description="Helical" evidence="1">
    <location>
        <begin position="409"/>
        <end position="433"/>
    </location>
</feature>
<feature type="region of interest" description="Acyltransferase">
    <location>
        <begin position="15"/>
        <end position="138"/>
    </location>
</feature>
<feature type="region of interest" description="AMP-binding">
    <location>
        <begin position="233"/>
        <end position="646"/>
    </location>
</feature>
<feature type="active site" evidence="1">
    <location>
        <position position="36"/>
    </location>
</feature>
<protein>
    <recommendedName>
        <fullName evidence="1">Bifunctional protein Aas</fullName>
    </recommendedName>
    <domain>
        <recommendedName>
            <fullName evidence="1">2-acylglycerophosphoethanolamine acyltransferase</fullName>
            <ecNumber evidence="1">2.3.1.40</ecNumber>
        </recommendedName>
        <alternativeName>
            <fullName evidence="1">2-acyl-GPE acyltransferase</fullName>
        </alternativeName>
        <alternativeName>
            <fullName evidence="1">Acyl-[acyl-carrier-protein]--phospholipid O-acyltransferase</fullName>
        </alternativeName>
    </domain>
    <domain>
        <recommendedName>
            <fullName evidence="1">Acyl-[acyl-carrier-protein] synthetase</fullName>
            <ecNumber evidence="1">6.2.1.20</ecNumber>
        </recommendedName>
        <alternativeName>
            <fullName evidence="1">Acyl-ACP synthetase</fullName>
        </alternativeName>
        <alternativeName>
            <fullName evidence="1">Long-chain-fatty-acid--[acyl-carrier-protein] ligase</fullName>
        </alternativeName>
    </domain>
</protein>